<reference key="1">
    <citation type="journal article" date="2006" name="J. Bacteriol.">
        <title>Comparison of the genome sequence of the poultry pathogen Bordetella avium with those of B. bronchiseptica, B. pertussis, and B. parapertussis reveals extensive diversity in surface structures associated with host interaction.</title>
        <authorList>
            <person name="Sebaihia M."/>
            <person name="Preston A."/>
            <person name="Maskell D.J."/>
            <person name="Kuzmiak H."/>
            <person name="Connell T.D."/>
            <person name="King N.D."/>
            <person name="Orndorff P.E."/>
            <person name="Miyamoto D.M."/>
            <person name="Thomson N.R."/>
            <person name="Harris D."/>
            <person name="Goble A."/>
            <person name="Lord A."/>
            <person name="Murphy L."/>
            <person name="Quail M.A."/>
            <person name="Rutter S."/>
            <person name="Squares R."/>
            <person name="Squares S."/>
            <person name="Woodward J."/>
            <person name="Parkhill J."/>
            <person name="Temple L.M."/>
        </authorList>
    </citation>
    <scope>NUCLEOTIDE SEQUENCE [LARGE SCALE GENOMIC DNA]</scope>
    <source>
        <strain>197N</strain>
    </source>
</reference>
<comment type="function">
    <text evidence="1">Catalyzes the transfer of a dimethylallyl group onto the adenine at position 37 in tRNAs that read codons beginning with uridine, leading to the formation of N6-(dimethylallyl)adenosine (i(6)A).</text>
</comment>
<comment type="catalytic activity">
    <reaction evidence="1">
        <text>adenosine(37) in tRNA + dimethylallyl diphosphate = N(6)-dimethylallyladenosine(37) in tRNA + diphosphate</text>
        <dbReference type="Rhea" id="RHEA:26482"/>
        <dbReference type="Rhea" id="RHEA-COMP:10162"/>
        <dbReference type="Rhea" id="RHEA-COMP:10375"/>
        <dbReference type="ChEBI" id="CHEBI:33019"/>
        <dbReference type="ChEBI" id="CHEBI:57623"/>
        <dbReference type="ChEBI" id="CHEBI:74411"/>
        <dbReference type="ChEBI" id="CHEBI:74415"/>
        <dbReference type="EC" id="2.5.1.75"/>
    </reaction>
</comment>
<comment type="cofactor">
    <cofactor evidence="1">
        <name>Mg(2+)</name>
        <dbReference type="ChEBI" id="CHEBI:18420"/>
    </cofactor>
</comment>
<comment type="subunit">
    <text evidence="1">Monomer.</text>
</comment>
<comment type="similarity">
    <text evidence="1">Belongs to the IPP transferase family.</text>
</comment>
<evidence type="ECO:0000255" key="1">
    <source>
        <dbReference type="HAMAP-Rule" id="MF_00185"/>
    </source>
</evidence>
<keyword id="KW-0067">ATP-binding</keyword>
<keyword id="KW-0460">Magnesium</keyword>
<keyword id="KW-0547">Nucleotide-binding</keyword>
<keyword id="KW-1185">Reference proteome</keyword>
<keyword id="KW-0808">Transferase</keyword>
<keyword id="KW-0819">tRNA processing</keyword>
<proteinExistence type="inferred from homology"/>
<dbReference type="EC" id="2.5.1.75" evidence="1"/>
<dbReference type="EMBL" id="AM167904">
    <property type="protein sequence ID" value="CAJ48335.1"/>
    <property type="molecule type" value="Genomic_DNA"/>
</dbReference>
<dbReference type="RefSeq" id="WP_012416420.1">
    <property type="nucleotide sequence ID" value="NC_010645.1"/>
</dbReference>
<dbReference type="SMR" id="Q2KX23"/>
<dbReference type="STRING" id="360910.BAV0724"/>
<dbReference type="KEGG" id="bav:BAV0724"/>
<dbReference type="eggNOG" id="COG0324">
    <property type="taxonomic scope" value="Bacteria"/>
</dbReference>
<dbReference type="HOGENOM" id="CLU_032616_0_0_4"/>
<dbReference type="OrthoDB" id="9776390at2"/>
<dbReference type="Proteomes" id="UP000001977">
    <property type="component" value="Chromosome"/>
</dbReference>
<dbReference type="GO" id="GO:0005524">
    <property type="term" value="F:ATP binding"/>
    <property type="evidence" value="ECO:0007669"/>
    <property type="project" value="UniProtKB-UniRule"/>
</dbReference>
<dbReference type="GO" id="GO:0052381">
    <property type="term" value="F:tRNA dimethylallyltransferase activity"/>
    <property type="evidence" value="ECO:0007669"/>
    <property type="project" value="UniProtKB-UniRule"/>
</dbReference>
<dbReference type="GO" id="GO:0006400">
    <property type="term" value="P:tRNA modification"/>
    <property type="evidence" value="ECO:0007669"/>
    <property type="project" value="TreeGrafter"/>
</dbReference>
<dbReference type="FunFam" id="1.10.20.140:FF:000001">
    <property type="entry name" value="tRNA dimethylallyltransferase"/>
    <property type="match status" value="1"/>
</dbReference>
<dbReference type="Gene3D" id="1.10.20.140">
    <property type="match status" value="1"/>
</dbReference>
<dbReference type="Gene3D" id="3.40.50.300">
    <property type="entry name" value="P-loop containing nucleotide triphosphate hydrolases"/>
    <property type="match status" value="1"/>
</dbReference>
<dbReference type="HAMAP" id="MF_00185">
    <property type="entry name" value="IPP_trans"/>
    <property type="match status" value="1"/>
</dbReference>
<dbReference type="InterPro" id="IPR039657">
    <property type="entry name" value="Dimethylallyltransferase"/>
</dbReference>
<dbReference type="InterPro" id="IPR018022">
    <property type="entry name" value="IPT"/>
</dbReference>
<dbReference type="InterPro" id="IPR027417">
    <property type="entry name" value="P-loop_NTPase"/>
</dbReference>
<dbReference type="NCBIfam" id="TIGR00174">
    <property type="entry name" value="miaA"/>
    <property type="match status" value="1"/>
</dbReference>
<dbReference type="PANTHER" id="PTHR11088">
    <property type="entry name" value="TRNA DIMETHYLALLYLTRANSFERASE"/>
    <property type="match status" value="1"/>
</dbReference>
<dbReference type="PANTHER" id="PTHR11088:SF60">
    <property type="entry name" value="TRNA DIMETHYLALLYLTRANSFERASE"/>
    <property type="match status" value="1"/>
</dbReference>
<dbReference type="Pfam" id="PF01715">
    <property type="entry name" value="IPPT"/>
    <property type="match status" value="1"/>
</dbReference>
<dbReference type="SUPFAM" id="SSF52540">
    <property type="entry name" value="P-loop containing nucleoside triphosphate hydrolases"/>
    <property type="match status" value="1"/>
</dbReference>
<gene>
    <name evidence="1" type="primary">miaA</name>
    <name type="ordered locus">BAV0724</name>
</gene>
<organism>
    <name type="scientific">Bordetella avium (strain 197N)</name>
    <dbReference type="NCBI Taxonomy" id="360910"/>
    <lineage>
        <taxon>Bacteria</taxon>
        <taxon>Pseudomonadati</taxon>
        <taxon>Pseudomonadota</taxon>
        <taxon>Betaproteobacteria</taxon>
        <taxon>Burkholderiales</taxon>
        <taxon>Alcaligenaceae</taxon>
        <taxon>Bordetella</taxon>
    </lineage>
</organism>
<protein>
    <recommendedName>
        <fullName evidence="1">tRNA dimethylallyltransferase</fullName>
        <ecNumber evidence="1">2.5.1.75</ecNumber>
    </recommendedName>
    <alternativeName>
        <fullName evidence="1">Dimethylallyl diphosphate:tRNA dimethylallyltransferase</fullName>
        <shortName evidence="1">DMAPP:tRNA dimethylallyltransferase</shortName>
        <shortName evidence="1">DMATase</shortName>
    </alternativeName>
    <alternativeName>
        <fullName evidence="1">Isopentenyl-diphosphate:tRNA isopentenyltransferase</fullName>
        <shortName evidence="1">IPP transferase</shortName>
        <shortName evidence="1">IPPT</shortName>
        <shortName evidence="1">IPTase</shortName>
    </alternativeName>
</protein>
<name>MIAA_BORA1</name>
<sequence>MNTPPLICLAGPTAAGKSAATLALAERWPLEIINVDSATIYRGMDIGTAKPSAAEQAQVAQHLLDIRDPSQAYSAADFRTDTLALIEDIQARGRIPLLAGGTMLYYKALREGLDDLPQADPVLRAELEARAANEGWPALHAELARHDPITAARLSPNDSQRIQRALEVCLLSGRAMSALLTGTRRPAPSDLRFVTISLEPSDRAGLHARIAQRFDAMLQAGLEAEVRSLKQRTDLHPGLPSVRCVGYRQMWAYLDGEVSFDEAREQGIAATRQLAKRQLTWLRAQPERVIVDCLAAGTAARVVDIAARYLPG</sequence>
<accession>Q2KX23</accession>
<feature type="chain" id="PRO_1000020565" description="tRNA dimethylallyltransferase">
    <location>
        <begin position="1"/>
        <end position="312"/>
    </location>
</feature>
<feature type="region of interest" description="Interaction with substrate tRNA" evidence="1">
    <location>
        <begin position="36"/>
        <end position="39"/>
    </location>
</feature>
<feature type="region of interest" description="Interaction with substrate tRNA" evidence="1">
    <location>
        <begin position="160"/>
        <end position="164"/>
    </location>
</feature>
<feature type="region of interest" description="Interaction with substrate tRNA" evidence="1">
    <location>
        <begin position="243"/>
        <end position="248"/>
    </location>
</feature>
<feature type="binding site" evidence="1">
    <location>
        <begin position="11"/>
        <end position="18"/>
    </location>
    <ligand>
        <name>ATP</name>
        <dbReference type="ChEBI" id="CHEBI:30616"/>
    </ligand>
</feature>
<feature type="binding site" evidence="1">
    <location>
        <begin position="13"/>
        <end position="18"/>
    </location>
    <ligand>
        <name>substrate</name>
    </ligand>
</feature>
<feature type="site" description="Interaction with substrate tRNA" evidence="1">
    <location>
        <position position="102"/>
    </location>
</feature>
<feature type="site" description="Interaction with substrate tRNA" evidence="1">
    <location>
        <position position="124"/>
    </location>
</feature>